<comment type="function">
    <text evidence="1">Component of the ribosome, a large ribonucleoprotein complex responsible for the synthesis of proteins in the cell. The small ribosomal subunit (SSU) binds messenger RNAs (mRNAs) and translates the encoded message by selecting cognate aminoacyl-transfer RNA (tRNA) molecules. The large subunit (LSU) contains the ribosomal catalytic site termed the peptidyl transferase center (PTC), which catalyzes the formation of peptide bonds, thereby polymerizing the amino acids delivered by tRNAs into a polypeptide chain. The nascent polypeptides leave the ribosome through a tunnel in the LSU and interact with protein factors that function in enzymatic processing, targeting, and the membrane insertion of nascent chains at the exit of the ribosomal tunnel.</text>
</comment>
<comment type="subunit">
    <text evidence="1">Component of the small ribosomal subunit (SSU). Mature yeast ribosomes consist of a small (40S) and a large (60S) subunit. The 40S small subunit contains 1 molecule of ribosomal RNA (18S rRNA) and at least 33 different proteins. The large 60S subunit contains 3 rRNA molecules (25S, 5.8S and 5S rRNA) and at least 46 different proteins.</text>
</comment>
<comment type="subcellular location">
    <subcellularLocation>
        <location evidence="2">Cytoplasm</location>
    </subcellularLocation>
</comment>
<comment type="similarity">
    <text evidence="4">Belongs to the universal ribosomal protein uS10 family.</text>
</comment>
<gene>
    <name type="primary">rps20</name>
    <name type="ORF">SPCC576.09</name>
</gene>
<protein>
    <recommendedName>
        <fullName evidence="4">Small ribosomal subunit protein uS10</fullName>
    </recommendedName>
    <alternativeName>
        <fullName>40S ribosomal protein S20</fullName>
    </alternativeName>
</protein>
<organism>
    <name type="scientific">Schizosaccharomyces pombe (strain 972 / ATCC 24843)</name>
    <name type="common">Fission yeast</name>
    <dbReference type="NCBI Taxonomy" id="284812"/>
    <lineage>
        <taxon>Eukaryota</taxon>
        <taxon>Fungi</taxon>
        <taxon>Dikarya</taxon>
        <taxon>Ascomycota</taxon>
        <taxon>Taphrinomycotina</taxon>
        <taxon>Schizosaccharomycetes</taxon>
        <taxon>Schizosaccharomycetales</taxon>
        <taxon>Schizosaccharomycetaceae</taxon>
        <taxon>Schizosaccharomyces</taxon>
    </lineage>
</organism>
<feature type="chain" id="PRO_0000146691" description="Small ribosomal subunit protein uS10">
    <location>
        <begin position="1"/>
        <end position="118"/>
    </location>
</feature>
<feature type="modified residue" description="Phosphoserine" evidence="3">
    <location>
        <position position="37"/>
    </location>
</feature>
<name>RS20_SCHPO</name>
<dbReference type="EMBL" id="AF282863">
    <property type="protein sequence ID" value="AAG00495.1"/>
    <property type="molecule type" value="mRNA"/>
</dbReference>
<dbReference type="EMBL" id="CU329672">
    <property type="protein sequence ID" value="CAA21188.1"/>
    <property type="molecule type" value="Genomic_DNA"/>
</dbReference>
<dbReference type="EMBL" id="U97389">
    <property type="protein sequence ID" value="AAB63881.1"/>
    <property type="molecule type" value="mRNA"/>
</dbReference>
<dbReference type="PIR" id="T41419">
    <property type="entry name" value="T41419"/>
</dbReference>
<dbReference type="RefSeq" id="NP_588436.1">
    <property type="nucleotide sequence ID" value="NM_001023427.2"/>
</dbReference>
<dbReference type="PDB" id="9AXT">
    <property type="method" value="EM"/>
    <property type="resolution" value="2.40 A"/>
    <property type="chains" value="Aa=1-118"/>
</dbReference>
<dbReference type="PDB" id="9AXV">
    <property type="method" value="EM"/>
    <property type="resolution" value="2.40 A"/>
    <property type="chains" value="Aa=1-118"/>
</dbReference>
<dbReference type="PDBsum" id="9AXT"/>
<dbReference type="PDBsum" id="9AXV"/>
<dbReference type="EMDB" id="EMD-43972"/>
<dbReference type="EMDB" id="EMD-43976"/>
<dbReference type="SMR" id="O74893"/>
<dbReference type="BioGRID" id="276012">
    <property type="interactions" value="4"/>
</dbReference>
<dbReference type="FunCoup" id="O74893">
    <property type="interactions" value="387"/>
</dbReference>
<dbReference type="IntAct" id="O74893">
    <property type="interactions" value="2"/>
</dbReference>
<dbReference type="MINT" id="O74893"/>
<dbReference type="STRING" id="284812.O74893"/>
<dbReference type="iPTMnet" id="O74893"/>
<dbReference type="PaxDb" id="4896-SPCC576.09.1"/>
<dbReference type="EnsemblFungi" id="SPCC576.09.1">
    <property type="protein sequence ID" value="SPCC576.09.1:pep"/>
    <property type="gene ID" value="SPCC576.09"/>
</dbReference>
<dbReference type="GeneID" id="2539449"/>
<dbReference type="KEGG" id="spo:2539449"/>
<dbReference type="PomBase" id="SPCC576.09">
    <property type="gene designation" value="rps20"/>
</dbReference>
<dbReference type="VEuPathDB" id="FungiDB:SPCC576.09"/>
<dbReference type="eggNOG" id="KOG0900">
    <property type="taxonomic scope" value="Eukaryota"/>
</dbReference>
<dbReference type="HOGENOM" id="CLU_122625_0_1_1"/>
<dbReference type="InParanoid" id="O74893"/>
<dbReference type="OMA" id="IHKRVIH"/>
<dbReference type="PhylomeDB" id="O74893"/>
<dbReference type="Reactome" id="R-SPO-156827">
    <property type="pathway name" value="L13a-mediated translational silencing of Ceruloplasmin expression"/>
</dbReference>
<dbReference type="Reactome" id="R-SPO-1799339">
    <property type="pathway name" value="SRP-dependent cotranslational protein targeting to membrane"/>
</dbReference>
<dbReference type="Reactome" id="R-SPO-72649">
    <property type="pathway name" value="Translation initiation complex formation"/>
</dbReference>
<dbReference type="Reactome" id="R-SPO-72689">
    <property type="pathway name" value="Formation of a pool of free 40S subunits"/>
</dbReference>
<dbReference type="Reactome" id="R-SPO-72695">
    <property type="pathway name" value="Formation of the ternary complex, and subsequently, the 43S complex"/>
</dbReference>
<dbReference type="Reactome" id="R-SPO-72702">
    <property type="pathway name" value="Ribosomal scanning and start codon recognition"/>
</dbReference>
<dbReference type="Reactome" id="R-SPO-72706">
    <property type="pathway name" value="GTP hydrolysis and joining of the 60S ribosomal subunit"/>
</dbReference>
<dbReference type="Reactome" id="R-SPO-975956">
    <property type="pathway name" value="Nonsense Mediated Decay (NMD) independent of the Exon Junction Complex (EJC)"/>
</dbReference>
<dbReference type="Reactome" id="R-SPO-975957">
    <property type="pathway name" value="Nonsense Mediated Decay (NMD) enhanced by the Exon Junction Complex (EJC)"/>
</dbReference>
<dbReference type="PRO" id="PR:O74893"/>
<dbReference type="Proteomes" id="UP000002485">
    <property type="component" value="Chromosome III"/>
</dbReference>
<dbReference type="GO" id="GO:0005829">
    <property type="term" value="C:cytosol"/>
    <property type="evidence" value="ECO:0007005"/>
    <property type="project" value="PomBase"/>
</dbReference>
<dbReference type="GO" id="GO:0022627">
    <property type="term" value="C:cytosolic small ribosomal subunit"/>
    <property type="evidence" value="ECO:0000269"/>
    <property type="project" value="PomBase"/>
</dbReference>
<dbReference type="GO" id="GO:0003735">
    <property type="term" value="F:structural constituent of ribosome"/>
    <property type="evidence" value="ECO:0000318"/>
    <property type="project" value="GO_Central"/>
</dbReference>
<dbReference type="GO" id="GO:0002181">
    <property type="term" value="P:cytoplasmic translation"/>
    <property type="evidence" value="ECO:0000266"/>
    <property type="project" value="PomBase"/>
</dbReference>
<dbReference type="GO" id="GO:0042254">
    <property type="term" value="P:ribosome biogenesis"/>
    <property type="evidence" value="ECO:0000266"/>
    <property type="project" value="PomBase"/>
</dbReference>
<dbReference type="FunFam" id="3.30.70.600:FF:000002">
    <property type="entry name" value="40S ribosomal protein S20"/>
    <property type="match status" value="1"/>
</dbReference>
<dbReference type="Gene3D" id="3.30.70.600">
    <property type="entry name" value="Ribosomal protein S10 domain"/>
    <property type="match status" value="1"/>
</dbReference>
<dbReference type="HAMAP" id="MF_00508">
    <property type="entry name" value="Ribosomal_uS10"/>
    <property type="match status" value="1"/>
</dbReference>
<dbReference type="InterPro" id="IPR001848">
    <property type="entry name" value="Ribosomal_uS10"/>
</dbReference>
<dbReference type="InterPro" id="IPR027486">
    <property type="entry name" value="Ribosomal_uS10_dom"/>
</dbReference>
<dbReference type="InterPro" id="IPR036838">
    <property type="entry name" value="Ribosomal_uS10_dom_sf"/>
</dbReference>
<dbReference type="InterPro" id="IPR005729">
    <property type="entry name" value="Ribosomal_uS10_euk/arc"/>
</dbReference>
<dbReference type="NCBIfam" id="TIGR01046">
    <property type="entry name" value="uS10_euk_arch"/>
    <property type="match status" value="1"/>
</dbReference>
<dbReference type="PANTHER" id="PTHR11700">
    <property type="entry name" value="30S RIBOSOMAL PROTEIN S10 FAMILY MEMBER"/>
    <property type="match status" value="1"/>
</dbReference>
<dbReference type="Pfam" id="PF00338">
    <property type="entry name" value="Ribosomal_S10"/>
    <property type="match status" value="1"/>
</dbReference>
<dbReference type="PRINTS" id="PR00971">
    <property type="entry name" value="RIBOSOMALS10"/>
</dbReference>
<dbReference type="SMART" id="SM01403">
    <property type="entry name" value="Ribosomal_S10"/>
    <property type="match status" value="1"/>
</dbReference>
<dbReference type="SUPFAM" id="SSF54999">
    <property type="entry name" value="Ribosomal protein S10"/>
    <property type="match status" value="1"/>
</dbReference>
<evidence type="ECO:0000250" key="1">
    <source>
        <dbReference type="UniProtKB" id="P38701"/>
    </source>
</evidence>
<evidence type="ECO:0000269" key="2">
    <source>
    </source>
</evidence>
<evidence type="ECO:0000269" key="3">
    <source>
    </source>
</evidence>
<evidence type="ECO:0000305" key="4"/>
<reference key="1">
    <citation type="submission" date="2000-06" db="EMBL/GenBank/DDBJ databases">
        <title>The cloning and nucleotide sequence of ribosomal protein S20 of Schizosaccharomyces pombe.</title>
        <authorList>
            <person name="Lee Y."/>
            <person name="Park E."/>
            <person name="Lim C."/>
        </authorList>
    </citation>
    <scope>NUCLEOTIDE SEQUENCE [MRNA]</scope>
</reference>
<reference key="2">
    <citation type="journal article" date="2002" name="Nature">
        <title>The genome sequence of Schizosaccharomyces pombe.</title>
        <authorList>
            <person name="Wood V."/>
            <person name="Gwilliam R."/>
            <person name="Rajandream M.A."/>
            <person name="Lyne M.H."/>
            <person name="Lyne R."/>
            <person name="Stewart A."/>
            <person name="Sgouros J.G."/>
            <person name="Peat N."/>
            <person name="Hayles J."/>
            <person name="Baker S.G."/>
            <person name="Basham D."/>
            <person name="Bowman S."/>
            <person name="Brooks K."/>
            <person name="Brown D."/>
            <person name="Brown S."/>
            <person name="Chillingworth T."/>
            <person name="Churcher C.M."/>
            <person name="Collins M."/>
            <person name="Connor R."/>
            <person name="Cronin A."/>
            <person name="Davis P."/>
            <person name="Feltwell T."/>
            <person name="Fraser A."/>
            <person name="Gentles S."/>
            <person name="Goble A."/>
            <person name="Hamlin N."/>
            <person name="Harris D.E."/>
            <person name="Hidalgo J."/>
            <person name="Hodgson G."/>
            <person name="Holroyd S."/>
            <person name="Hornsby T."/>
            <person name="Howarth S."/>
            <person name="Huckle E.J."/>
            <person name="Hunt S."/>
            <person name="Jagels K."/>
            <person name="James K.D."/>
            <person name="Jones L."/>
            <person name="Jones M."/>
            <person name="Leather S."/>
            <person name="McDonald S."/>
            <person name="McLean J."/>
            <person name="Mooney P."/>
            <person name="Moule S."/>
            <person name="Mungall K.L."/>
            <person name="Murphy L.D."/>
            <person name="Niblett D."/>
            <person name="Odell C."/>
            <person name="Oliver K."/>
            <person name="O'Neil S."/>
            <person name="Pearson D."/>
            <person name="Quail M.A."/>
            <person name="Rabbinowitsch E."/>
            <person name="Rutherford K.M."/>
            <person name="Rutter S."/>
            <person name="Saunders D."/>
            <person name="Seeger K."/>
            <person name="Sharp S."/>
            <person name="Skelton J."/>
            <person name="Simmonds M.N."/>
            <person name="Squares R."/>
            <person name="Squares S."/>
            <person name="Stevens K."/>
            <person name="Taylor K."/>
            <person name="Taylor R.G."/>
            <person name="Tivey A."/>
            <person name="Walsh S.V."/>
            <person name="Warren T."/>
            <person name="Whitehead S."/>
            <person name="Woodward J.R."/>
            <person name="Volckaert G."/>
            <person name="Aert R."/>
            <person name="Robben J."/>
            <person name="Grymonprez B."/>
            <person name="Weltjens I."/>
            <person name="Vanstreels E."/>
            <person name="Rieger M."/>
            <person name="Schaefer M."/>
            <person name="Mueller-Auer S."/>
            <person name="Gabel C."/>
            <person name="Fuchs M."/>
            <person name="Duesterhoeft A."/>
            <person name="Fritzc C."/>
            <person name="Holzer E."/>
            <person name="Moestl D."/>
            <person name="Hilbert H."/>
            <person name="Borzym K."/>
            <person name="Langer I."/>
            <person name="Beck A."/>
            <person name="Lehrach H."/>
            <person name="Reinhardt R."/>
            <person name="Pohl T.M."/>
            <person name="Eger P."/>
            <person name="Zimmermann W."/>
            <person name="Wedler H."/>
            <person name="Wambutt R."/>
            <person name="Purnelle B."/>
            <person name="Goffeau A."/>
            <person name="Cadieu E."/>
            <person name="Dreano S."/>
            <person name="Gloux S."/>
            <person name="Lelaure V."/>
            <person name="Mottier S."/>
            <person name="Galibert F."/>
            <person name="Aves S.J."/>
            <person name="Xiang Z."/>
            <person name="Hunt C."/>
            <person name="Moore K."/>
            <person name="Hurst S.M."/>
            <person name="Lucas M."/>
            <person name="Rochet M."/>
            <person name="Gaillardin C."/>
            <person name="Tallada V.A."/>
            <person name="Garzon A."/>
            <person name="Thode G."/>
            <person name="Daga R.R."/>
            <person name="Cruzado L."/>
            <person name="Jimenez J."/>
            <person name="Sanchez M."/>
            <person name="del Rey F."/>
            <person name="Benito J."/>
            <person name="Dominguez A."/>
            <person name="Revuelta J.L."/>
            <person name="Moreno S."/>
            <person name="Armstrong J."/>
            <person name="Forsburg S.L."/>
            <person name="Cerutti L."/>
            <person name="Lowe T."/>
            <person name="McCombie W.R."/>
            <person name="Paulsen I."/>
            <person name="Potashkin J."/>
            <person name="Shpakovski G.V."/>
            <person name="Ussery D."/>
            <person name="Barrell B.G."/>
            <person name="Nurse P."/>
        </authorList>
    </citation>
    <scope>NUCLEOTIDE SEQUENCE [LARGE SCALE GENOMIC DNA]</scope>
    <source>
        <strain>972 / ATCC 24843</strain>
    </source>
</reference>
<reference key="3">
    <citation type="submission" date="1997-04" db="EMBL/GenBank/DDBJ databases">
        <authorList>
            <person name="Jang Y.-J."/>
            <person name="Yoo H.-S."/>
        </authorList>
    </citation>
    <scope>NUCLEOTIDE SEQUENCE [MRNA] OF 1-56</scope>
    <source>
        <strain>972 / ATCC 24843</strain>
    </source>
</reference>
<reference key="4">
    <citation type="journal article" date="2006" name="Nat. Biotechnol.">
        <title>ORFeome cloning and global analysis of protein localization in the fission yeast Schizosaccharomyces pombe.</title>
        <authorList>
            <person name="Matsuyama A."/>
            <person name="Arai R."/>
            <person name="Yashiroda Y."/>
            <person name="Shirai A."/>
            <person name="Kamata A."/>
            <person name="Sekido S."/>
            <person name="Kobayashi Y."/>
            <person name="Hashimoto A."/>
            <person name="Hamamoto M."/>
            <person name="Hiraoka Y."/>
            <person name="Horinouchi S."/>
            <person name="Yoshida M."/>
        </authorList>
    </citation>
    <scope>SUBCELLULAR LOCATION [LARGE SCALE ANALYSIS]</scope>
</reference>
<reference key="5">
    <citation type="journal article" date="2008" name="J. Proteome Res.">
        <title>Phosphoproteome analysis of fission yeast.</title>
        <authorList>
            <person name="Wilson-Grady J.T."/>
            <person name="Villen J."/>
            <person name="Gygi S.P."/>
        </authorList>
    </citation>
    <scope>PHOSPHORYLATION [LARGE SCALE ANALYSIS] AT SER-37</scope>
    <scope>IDENTIFICATION BY MASS SPECTROMETRY</scope>
</reference>
<sequence>MSQVAKDQKEQQIPSTVHRIRITLTSRNVRNLEKVCSDLVNRAKDKQLRVKGPVRLPTKILKITTRKTPNGEGSKTWETYEMRIHKRLIDLHSPSEIVKQITSIHIEPGVEVEVTIAQ</sequence>
<keyword id="KW-0002">3D-structure</keyword>
<keyword id="KW-0963">Cytoplasm</keyword>
<keyword id="KW-0597">Phosphoprotein</keyword>
<keyword id="KW-1185">Reference proteome</keyword>
<keyword id="KW-0687">Ribonucleoprotein</keyword>
<keyword id="KW-0689">Ribosomal protein</keyword>
<accession>O74893</accession>
<accession>O14390</accession>
<proteinExistence type="evidence at protein level"/>